<gene>
    <name evidence="1" type="primary">rnz</name>
    <name type="ordered locus">Nmar_1776</name>
</gene>
<reference key="1">
    <citation type="journal article" date="2010" name="Proc. Natl. Acad. Sci. U.S.A.">
        <title>Nitrosopumilus maritimus genome reveals unique mechanisms for nitrification and autotrophy in globally distributed marine crenarchaea.</title>
        <authorList>
            <person name="Walker C.B."/>
            <person name="de la Torre J.R."/>
            <person name="Klotz M.G."/>
            <person name="Urakawa H."/>
            <person name="Pinel N."/>
            <person name="Arp D.J."/>
            <person name="Brochier-Armanet C."/>
            <person name="Chain P.S."/>
            <person name="Chan P.P."/>
            <person name="Gollabgir A."/>
            <person name="Hemp J."/>
            <person name="Hugler M."/>
            <person name="Karr E.A."/>
            <person name="Konneke M."/>
            <person name="Shin M."/>
            <person name="Lawton T.J."/>
            <person name="Lowe T."/>
            <person name="Martens-Habbena W."/>
            <person name="Sayavedra-Soto L.A."/>
            <person name="Lang D."/>
            <person name="Sievert S.M."/>
            <person name="Rosenzweig A.C."/>
            <person name="Manning G."/>
            <person name="Stahl D.A."/>
        </authorList>
    </citation>
    <scope>NUCLEOTIDE SEQUENCE [LARGE SCALE GENOMIC DNA]</scope>
    <source>
        <strain>SCM1</strain>
    </source>
</reference>
<keyword id="KW-0255">Endonuclease</keyword>
<keyword id="KW-0378">Hydrolase</keyword>
<keyword id="KW-0479">Metal-binding</keyword>
<keyword id="KW-0540">Nuclease</keyword>
<keyword id="KW-1185">Reference proteome</keyword>
<keyword id="KW-0819">tRNA processing</keyword>
<keyword id="KW-0862">Zinc</keyword>
<evidence type="ECO:0000255" key="1">
    <source>
        <dbReference type="HAMAP-Rule" id="MF_01818"/>
    </source>
</evidence>
<protein>
    <recommendedName>
        <fullName evidence="1">Ribonuclease Z</fullName>
        <shortName evidence="1">RNase Z</shortName>
        <ecNumber evidence="1">3.1.26.11</ecNumber>
    </recommendedName>
    <alternativeName>
        <fullName evidence="1">tRNA 3 endonuclease</fullName>
    </alternativeName>
    <alternativeName>
        <fullName evidence="1">tRNase Z</fullName>
    </alternativeName>
</protein>
<name>RNZ_NITMS</name>
<comment type="function">
    <text evidence="1">Zinc phosphodiesterase, which displays some tRNA 3'-processing endonuclease activity. Probably involved in tRNA maturation, by removing a 3'-trailer from precursor tRNA.</text>
</comment>
<comment type="catalytic activity">
    <reaction evidence="1">
        <text>Endonucleolytic cleavage of RNA, removing extra 3' nucleotides from tRNA precursor, generating 3' termini of tRNAs. A 3'-hydroxy group is left at the tRNA terminus and a 5'-phosphoryl group is left at the trailer molecule.</text>
        <dbReference type="EC" id="3.1.26.11"/>
    </reaction>
</comment>
<comment type="cofactor">
    <cofactor evidence="1">
        <name>Zn(2+)</name>
        <dbReference type="ChEBI" id="CHEBI:29105"/>
    </cofactor>
    <text evidence="1">Binds 2 Zn(2+) ions.</text>
</comment>
<comment type="subunit">
    <text evidence="1">Homodimer.</text>
</comment>
<comment type="similarity">
    <text evidence="1">Belongs to the RNase Z family.</text>
</comment>
<sequence>MKLVFLGTSAAQPTENRGLSCICLEREGEVLMFDAGEAAQISYMKSGLGWNKKMKIFVTHLHGDHCVGILGLLQTMSMQNRTESLEIFGPSGIEEFIAANIKVLNFGLSFPILINTIKDEKIFEDEKFLIRTCKANHSIIAFSYLFEEKDKPGRFNVEKAKELGIPEGELWNKLQNGNEITVNEKIIKPEQVLGERRPGKKIGISGDTMPTKELEEFFEECDYLVFDSTFLEAEKQKAQDTCHSTAKQAATVAKNAKVKNLVLTHFSARYRDEVEHLREAKEIHDSVITAKDLLEIEIK</sequence>
<organism>
    <name type="scientific">Nitrosopumilus maritimus (strain SCM1)</name>
    <dbReference type="NCBI Taxonomy" id="436308"/>
    <lineage>
        <taxon>Archaea</taxon>
        <taxon>Nitrososphaerota</taxon>
        <taxon>Nitrososphaeria</taxon>
        <taxon>Nitrosopumilales</taxon>
        <taxon>Nitrosopumilaceae</taxon>
        <taxon>Nitrosopumilus</taxon>
    </lineage>
</organism>
<dbReference type="EC" id="3.1.26.11" evidence="1"/>
<dbReference type="EMBL" id="CP000866">
    <property type="protein sequence ID" value="ABX13672.1"/>
    <property type="molecule type" value="Genomic_DNA"/>
</dbReference>
<dbReference type="RefSeq" id="WP_012216158.1">
    <property type="nucleotide sequence ID" value="NC_010085.1"/>
</dbReference>
<dbReference type="SMR" id="A9A3X2"/>
<dbReference type="FunCoup" id="A9A3X2">
    <property type="interactions" value="111"/>
</dbReference>
<dbReference type="STRING" id="436308.Nmar_1776"/>
<dbReference type="EnsemblBacteria" id="ABX13672">
    <property type="protein sequence ID" value="ABX13672"/>
    <property type="gene ID" value="Nmar_1776"/>
</dbReference>
<dbReference type="GeneID" id="5773914"/>
<dbReference type="KEGG" id="nmr:Nmar_1776"/>
<dbReference type="eggNOG" id="arCOG00501">
    <property type="taxonomic scope" value="Archaea"/>
</dbReference>
<dbReference type="HOGENOM" id="CLU_031317_2_1_2"/>
<dbReference type="InParanoid" id="A9A3X2"/>
<dbReference type="OrthoDB" id="85118at2157"/>
<dbReference type="PhylomeDB" id="A9A3X2"/>
<dbReference type="Proteomes" id="UP000000792">
    <property type="component" value="Chromosome"/>
</dbReference>
<dbReference type="GO" id="GO:0042781">
    <property type="term" value="F:3'-tRNA processing endoribonuclease activity"/>
    <property type="evidence" value="ECO:0000318"/>
    <property type="project" value="GO_Central"/>
</dbReference>
<dbReference type="GO" id="GO:0008270">
    <property type="term" value="F:zinc ion binding"/>
    <property type="evidence" value="ECO:0007669"/>
    <property type="project" value="UniProtKB-UniRule"/>
</dbReference>
<dbReference type="CDD" id="cd07717">
    <property type="entry name" value="RNaseZ_ZiPD-like_MBL-fold"/>
    <property type="match status" value="1"/>
</dbReference>
<dbReference type="FunFam" id="3.60.15.10:FF:000002">
    <property type="entry name" value="Ribonuclease Z"/>
    <property type="match status" value="1"/>
</dbReference>
<dbReference type="Gene3D" id="3.60.15.10">
    <property type="entry name" value="Ribonuclease Z/Hydroxyacylglutathione hydrolase-like"/>
    <property type="match status" value="1"/>
</dbReference>
<dbReference type="HAMAP" id="MF_01818">
    <property type="entry name" value="RNase_Z_BN"/>
    <property type="match status" value="1"/>
</dbReference>
<dbReference type="InterPro" id="IPR001279">
    <property type="entry name" value="Metallo-B-lactamas"/>
</dbReference>
<dbReference type="InterPro" id="IPR036866">
    <property type="entry name" value="RibonucZ/Hydroxyglut_hydro"/>
</dbReference>
<dbReference type="InterPro" id="IPR013471">
    <property type="entry name" value="RNase_Z/BN"/>
</dbReference>
<dbReference type="NCBIfam" id="NF000801">
    <property type="entry name" value="PRK00055.1-3"/>
    <property type="match status" value="1"/>
</dbReference>
<dbReference type="NCBIfam" id="TIGR02651">
    <property type="entry name" value="RNase_Z"/>
    <property type="match status" value="1"/>
</dbReference>
<dbReference type="PANTHER" id="PTHR46018">
    <property type="entry name" value="ZINC PHOSPHODIESTERASE ELAC PROTEIN 1"/>
    <property type="match status" value="1"/>
</dbReference>
<dbReference type="PANTHER" id="PTHR46018:SF2">
    <property type="entry name" value="ZINC PHOSPHODIESTERASE ELAC PROTEIN 1"/>
    <property type="match status" value="1"/>
</dbReference>
<dbReference type="Pfam" id="PF00753">
    <property type="entry name" value="Lactamase_B"/>
    <property type="match status" value="1"/>
</dbReference>
<dbReference type="Pfam" id="PF12706">
    <property type="entry name" value="Lactamase_B_2"/>
    <property type="match status" value="1"/>
</dbReference>
<dbReference type="SUPFAM" id="SSF56281">
    <property type="entry name" value="Metallo-hydrolase/oxidoreductase"/>
    <property type="match status" value="1"/>
</dbReference>
<proteinExistence type="inferred from homology"/>
<accession>A9A3X2</accession>
<feature type="chain" id="PRO_1000187974" description="Ribonuclease Z">
    <location>
        <begin position="1"/>
        <end position="299"/>
    </location>
</feature>
<feature type="active site" description="Proton acceptor" evidence="1">
    <location>
        <position position="64"/>
    </location>
</feature>
<feature type="binding site" evidence="1">
    <location>
        <position position="60"/>
    </location>
    <ligand>
        <name>Zn(2+)</name>
        <dbReference type="ChEBI" id="CHEBI:29105"/>
        <label>1</label>
        <note>catalytic</note>
    </ligand>
</feature>
<feature type="binding site" evidence="1">
    <location>
        <position position="62"/>
    </location>
    <ligand>
        <name>Zn(2+)</name>
        <dbReference type="ChEBI" id="CHEBI:29105"/>
        <label>1</label>
        <note>catalytic</note>
    </ligand>
</feature>
<feature type="binding site" evidence="1">
    <location>
        <position position="64"/>
    </location>
    <ligand>
        <name>Zn(2+)</name>
        <dbReference type="ChEBI" id="CHEBI:29105"/>
        <label>2</label>
        <note>catalytic</note>
    </ligand>
</feature>
<feature type="binding site" evidence="1">
    <location>
        <position position="65"/>
    </location>
    <ligand>
        <name>Zn(2+)</name>
        <dbReference type="ChEBI" id="CHEBI:29105"/>
        <label>2</label>
        <note>catalytic</note>
    </ligand>
</feature>
<feature type="binding site" evidence="1">
    <location>
        <position position="137"/>
    </location>
    <ligand>
        <name>Zn(2+)</name>
        <dbReference type="ChEBI" id="CHEBI:29105"/>
        <label>1</label>
        <note>catalytic</note>
    </ligand>
</feature>
<feature type="binding site" evidence="1">
    <location>
        <position position="207"/>
    </location>
    <ligand>
        <name>Zn(2+)</name>
        <dbReference type="ChEBI" id="CHEBI:29105"/>
        <label>1</label>
        <note>catalytic</note>
    </ligand>
</feature>
<feature type="binding site" evidence="1">
    <location>
        <position position="207"/>
    </location>
    <ligand>
        <name>Zn(2+)</name>
        <dbReference type="ChEBI" id="CHEBI:29105"/>
        <label>2</label>
        <note>catalytic</note>
    </ligand>
</feature>
<feature type="binding site" evidence="1">
    <location>
        <position position="265"/>
    </location>
    <ligand>
        <name>Zn(2+)</name>
        <dbReference type="ChEBI" id="CHEBI:29105"/>
        <label>2</label>
        <note>catalytic</note>
    </ligand>
</feature>